<accession>B3EFB5</accession>
<protein>
    <recommendedName>
        <fullName evidence="1">Small ribosomal subunit protein uS15</fullName>
    </recommendedName>
    <alternativeName>
        <fullName evidence="2">30S ribosomal protein S15</fullName>
    </alternativeName>
</protein>
<proteinExistence type="inferred from homology"/>
<comment type="function">
    <text evidence="1">One of the primary rRNA binding proteins, it binds directly to 16S rRNA where it helps nucleate assembly of the platform of the 30S subunit by binding and bridging several RNA helices of the 16S rRNA.</text>
</comment>
<comment type="function">
    <text evidence="1">Forms an intersubunit bridge (bridge B4) with the 23S rRNA of the 50S subunit in the ribosome.</text>
</comment>
<comment type="subunit">
    <text evidence="1">Part of the 30S ribosomal subunit. Forms a bridge to the 50S subunit in the 70S ribosome, contacting the 23S rRNA.</text>
</comment>
<comment type="similarity">
    <text evidence="1">Belongs to the universal ribosomal protein uS15 family.</text>
</comment>
<organism>
    <name type="scientific">Chlorobium limicola (strain DSM 245 / NBRC 103803 / 6330)</name>
    <dbReference type="NCBI Taxonomy" id="290315"/>
    <lineage>
        <taxon>Bacteria</taxon>
        <taxon>Pseudomonadati</taxon>
        <taxon>Chlorobiota</taxon>
        <taxon>Chlorobiia</taxon>
        <taxon>Chlorobiales</taxon>
        <taxon>Chlorobiaceae</taxon>
        <taxon>Chlorobium/Pelodictyon group</taxon>
        <taxon>Chlorobium</taxon>
    </lineage>
</organism>
<evidence type="ECO:0000255" key="1">
    <source>
        <dbReference type="HAMAP-Rule" id="MF_01343"/>
    </source>
</evidence>
<evidence type="ECO:0000305" key="2"/>
<reference key="1">
    <citation type="submission" date="2008-05" db="EMBL/GenBank/DDBJ databases">
        <title>Complete sequence of Chlorobium limicola DSM 245.</title>
        <authorList>
            <consortium name="US DOE Joint Genome Institute"/>
            <person name="Lucas S."/>
            <person name="Copeland A."/>
            <person name="Lapidus A."/>
            <person name="Glavina del Rio T."/>
            <person name="Dalin E."/>
            <person name="Tice H."/>
            <person name="Bruce D."/>
            <person name="Goodwin L."/>
            <person name="Pitluck S."/>
            <person name="Schmutz J."/>
            <person name="Larimer F."/>
            <person name="Land M."/>
            <person name="Hauser L."/>
            <person name="Kyrpides N."/>
            <person name="Ovchinnikova G."/>
            <person name="Zhao F."/>
            <person name="Li T."/>
            <person name="Liu Z."/>
            <person name="Overmann J."/>
            <person name="Bryant D.A."/>
            <person name="Richardson P."/>
        </authorList>
    </citation>
    <scope>NUCLEOTIDE SEQUENCE [LARGE SCALE GENOMIC DNA]</scope>
    <source>
        <strain>DSM 245 / NBRC 103803 / 6330</strain>
    </source>
</reference>
<name>RS15_CHLL2</name>
<feature type="chain" id="PRO_1000143090" description="Small ribosomal subunit protein uS15">
    <location>
        <begin position="1"/>
        <end position="89"/>
    </location>
</feature>
<keyword id="KW-0687">Ribonucleoprotein</keyword>
<keyword id="KW-0689">Ribosomal protein</keyword>
<keyword id="KW-0694">RNA-binding</keyword>
<keyword id="KW-0699">rRNA-binding</keyword>
<dbReference type="EMBL" id="CP001097">
    <property type="protein sequence ID" value="ACD89398.1"/>
    <property type="molecule type" value="Genomic_DNA"/>
</dbReference>
<dbReference type="RefSeq" id="WP_012465279.1">
    <property type="nucleotide sequence ID" value="NC_010803.1"/>
</dbReference>
<dbReference type="SMR" id="B3EFB5"/>
<dbReference type="STRING" id="290315.Clim_0304"/>
<dbReference type="KEGG" id="cli:Clim_0304"/>
<dbReference type="eggNOG" id="COG0184">
    <property type="taxonomic scope" value="Bacteria"/>
</dbReference>
<dbReference type="HOGENOM" id="CLU_148518_0_0_10"/>
<dbReference type="OrthoDB" id="9799262at2"/>
<dbReference type="Proteomes" id="UP000008841">
    <property type="component" value="Chromosome"/>
</dbReference>
<dbReference type="GO" id="GO:0022627">
    <property type="term" value="C:cytosolic small ribosomal subunit"/>
    <property type="evidence" value="ECO:0007669"/>
    <property type="project" value="TreeGrafter"/>
</dbReference>
<dbReference type="GO" id="GO:0019843">
    <property type="term" value="F:rRNA binding"/>
    <property type="evidence" value="ECO:0007669"/>
    <property type="project" value="UniProtKB-UniRule"/>
</dbReference>
<dbReference type="GO" id="GO:0003735">
    <property type="term" value="F:structural constituent of ribosome"/>
    <property type="evidence" value="ECO:0007669"/>
    <property type="project" value="InterPro"/>
</dbReference>
<dbReference type="GO" id="GO:0006412">
    <property type="term" value="P:translation"/>
    <property type="evidence" value="ECO:0007669"/>
    <property type="project" value="UniProtKB-UniRule"/>
</dbReference>
<dbReference type="CDD" id="cd00353">
    <property type="entry name" value="Ribosomal_S15p_S13e"/>
    <property type="match status" value="1"/>
</dbReference>
<dbReference type="FunFam" id="1.10.287.10:FF:000002">
    <property type="entry name" value="30S ribosomal protein S15"/>
    <property type="match status" value="1"/>
</dbReference>
<dbReference type="Gene3D" id="6.10.250.3130">
    <property type="match status" value="1"/>
</dbReference>
<dbReference type="Gene3D" id="1.10.287.10">
    <property type="entry name" value="S15/NS1, RNA-binding"/>
    <property type="match status" value="1"/>
</dbReference>
<dbReference type="HAMAP" id="MF_01343_B">
    <property type="entry name" value="Ribosomal_uS15_B"/>
    <property type="match status" value="1"/>
</dbReference>
<dbReference type="InterPro" id="IPR000589">
    <property type="entry name" value="Ribosomal_uS15"/>
</dbReference>
<dbReference type="InterPro" id="IPR005290">
    <property type="entry name" value="Ribosomal_uS15_bac-type"/>
</dbReference>
<dbReference type="InterPro" id="IPR009068">
    <property type="entry name" value="uS15_NS1_RNA-bd_sf"/>
</dbReference>
<dbReference type="NCBIfam" id="TIGR00952">
    <property type="entry name" value="S15_bact"/>
    <property type="match status" value="1"/>
</dbReference>
<dbReference type="PANTHER" id="PTHR23321">
    <property type="entry name" value="RIBOSOMAL PROTEIN S15, BACTERIAL AND ORGANELLAR"/>
    <property type="match status" value="1"/>
</dbReference>
<dbReference type="PANTHER" id="PTHR23321:SF26">
    <property type="entry name" value="SMALL RIBOSOMAL SUBUNIT PROTEIN US15M"/>
    <property type="match status" value="1"/>
</dbReference>
<dbReference type="Pfam" id="PF00312">
    <property type="entry name" value="Ribosomal_S15"/>
    <property type="match status" value="1"/>
</dbReference>
<dbReference type="SMART" id="SM01387">
    <property type="entry name" value="Ribosomal_S15"/>
    <property type="match status" value="1"/>
</dbReference>
<dbReference type="SUPFAM" id="SSF47060">
    <property type="entry name" value="S15/NS1 RNA-binding domain"/>
    <property type="match status" value="1"/>
</dbReference>
<dbReference type="PROSITE" id="PS00362">
    <property type="entry name" value="RIBOSOMAL_S15"/>
    <property type="match status" value="1"/>
</dbReference>
<gene>
    <name evidence="1" type="primary">rpsO</name>
    <name type="ordered locus">Clim_0304</name>
</gene>
<sequence>MSLTKENKSNIITQFGGAVQNTGKAEVQVALFSGRITDLTGHLQKHPKDKHSRRGLLMLVGKRKKVLNYLKNVDIDRYRKVIADLDLRK</sequence>